<sequence>MNIIQQLEAEQAAKIEAKRTLPEFSPGDTVRVNVKVTEGTRTRVQAYEGVCIARSGGGLQENFTVRKISYGEGVERVFPIYSPMIESVDVVRRGKVRRAKLYYLRDRRGKSARIVEDTGVRARKLNDAERAAIAEEKARIEAEKVAAAQALAAEKAAADAAEAKAAAEAAAAAAEPAAE</sequence>
<feature type="chain" id="PRO_0000252532" description="Large ribosomal subunit protein bL19">
    <location>
        <begin position="1"/>
        <end position="179"/>
    </location>
</feature>
<proteinExistence type="inferred from homology"/>
<name>RL19_RHIJ3</name>
<comment type="function">
    <text evidence="1">This protein is located at the 30S-50S ribosomal subunit interface and may play a role in the structure and function of the aminoacyl-tRNA binding site.</text>
</comment>
<comment type="similarity">
    <text evidence="1">Belongs to the bacterial ribosomal protein bL19 family.</text>
</comment>
<dbReference type="EMBL" id="AM236080">
    <property type="protein sequence ID" value="CAK10036.1"/>
    <property type="molecule type" value="Genomic_DNA"/>
</dbReference>
<dbReference type="RefSeq" id="WP_011653908.1">
    <property type="nucleotide sequence ID" value="NC_008380.1"/>
</dbReference>
<dbReference type="SMR" id="Q1MAK2"/>
<dbReference type="EnsemblBacteria" id="CAK10036">
    <property type="protein sequence ID" value="CAK10036"/>
    <property type="gene ID" value="RL4552"/>
</dbReference>
<dbReference type="KEGG" id="rle:RL4552"/>
<dbReference type="eggNOG" id="COG0335">
    <property type="taxonomic scope" value="Bacteria"/>
</dbReference>
<dbReference type="HOGENOM" id="CLU_103507_0_2_5"/>
<dbReference type="Proteomes" id="UP000006575">
    <property type="component" value="Chromosome"/>
</dbReference>
<dbReference type="GO" id="GO:0022625">
    <property type="term" value="C:cytosolic large ribosomal subunit"/>
    <property type="evidence" value="ECO:0007669"/>
    <property type="project" value="TreeGrafter"/>
</dbReference>
<dbReference type="GO" id="GO:0003735">
    <property type="term" value="F:structural constituent of ribosome"/>
    <property type="evidence" value="ECO:0007669"/>
    <property type="project" value="InterPro"/>
</dbReference>
<dbReference type="GO" id="GO:0006412">
    <property type="term" value="P:translation"/>
    <property type="evidence" value="ECO:0007669"/>
    <property type="project" value="UniProtKB-UniRule"/>
</dbReference>
<dbReference type="FunFam" id="2.30.30.790:FF:000001">
    <property type="entry name" value="50S ribosomal protein L19"/>
    <property type="match status" value="1"/>
</dbReference>
<dbReference type="Gene3D" id="2.30.30.790">
    <property type="match status" value="1"/>
</dbReference>
<dbReference type="HAMAP" id="MF_00402">
    <property type="entry name" value="Ribosomal_bL19"/>
    <property type="match status" value="1"/>
</dbReference>
<dbReference type="InterPro" id="IPR001857">
    <property type="entry name" value="Ribosomal_bL19"/>
</dbReference>
<dbReference type="InterPro" id="IPR018257">
    <property type="entry name" value="Ribosomal_bL19_CS"/>
</dbReference>
<dbReference type="InterPro" id="IPR038657">
    <property type="entry name" value="Ribosomal_bL19_sf"/>
</dbReference>
<dbReference type="InterPro" id="IPR008991">
    <property type="entry name" value="Translation_prot_SH3-like_sf"/>
</dbReference>
<dbReference type="NCBIfam" id="TIGR01024">
    <property type="entry name" value="rplS_bact"/>
    <property type="match status" value="1"/>
</dbReference>
<dbReference type="PANTHER" id="PTHR15680:SF9">
    <property type="entry name" value="LARGE RIBOSOMAL SUBUNIT PROTEIN BL19M"/>
    <property type="match status" value="1"/>
</dbReference>
<dbReference type="PANTHER" id="PTHR15680">
    <property type="entry name" value="RIBOSOMAL PROTEIN L19"/>
    <property type="match status" value="1"/>
</dbReference>
<dbReference type="Pfam" id="PF01245">
    <property type="entry name" value="Ribosomal_L19"/>
    <property type="match status" value="1"/>
</dbReference>
<dbReference type="PRINTS" id="PR00061">
    <property type="entry name" value="RIBOSOMALL19"/>
</dbReference>
<dbReference type="SUPFAM" id="SSF50104">
    <property type="entry name" value="Translation proteins SH3-like domain"/>
    <property type="match status" value="1"/>
</dbReference>
<dbReference type="PROSITE" id="PS01015">
    <property type="entry name" value="RIBOSOMAL_L19"/>
    <property type="match status" value="1"/>
</dbReference>
<evidence type="ECO:0000255" key="1">
    <source>
        <dbReference type="HAMAP-Rule" id="MF_00402"/>
    </source>
</evidence>
<evidence type="ECO:0000305" key="2"/>
<organism>
    <name type="scientific">Rhizobium johnstonii (strain DSM 114642 / LMG 32736 / 3841)</name>
    <name type="common">Rhizobium leguminosarum bv. viciae</name>
    <dbReference type="NCBI Taxonomy" id="216596"/>
    <lineage>
        <taxon>Bacteria</taxon>
        <taxon>Pseudomonadati</taxon>
        <taxon>Pseudomonadota</taxon>
        <taxon>Alphaproteobacteria</taxon>
        <taxon>Hyphomicrobiales</taxon>
        <taxon>Rhizobiaceae</taxon>
        <taxon>Rhizobium/Agrobacterium group</taxon>
        <taxon>Rhizobium</taxon>
        <taxon>Rhizobium johnstonii</taxon>
    </lineage>
</organism>
<protein>
    <recommendedName>
        <fullName evidence="1">Large ribosomal subunit protein bL19</fullName>
    </recommendedName>
    <alternativeName>
        <fullName evidence="2">50S ribosomal protein L19</fullName>
    </alternativeName>
</protein>
<keyword id="KW-0687">Ribonucleoprotein</keyword>
<keyword id="KW-0689">Ribosomal protein</keyword>
<gene>
    <name evidence="1" type="primary">rplS</name>
    <name type="ordered locus">RL4552</name>
</gene>
<accession>Q1MAK2</accession>
<reference key="1">
    <citation type="journal article" date="2006" name="Genome Biol.">
        <title>The genome of Rhizobium leguminosarum has recognizable core and accessory components.</title>
        <authorList>
            <person name="Young J.P.W."/>
            <person name="Crossman L.C."/>
            <person name="Johnston A.W.B."/>
            <person name="Thomson N.R."/>
            <person name="Ghazoui Z.F."/>
            <person name="Hull K.H."/>
            <person name="Wexler M."/>
            <person name="Curson A.R.J."/>
            <person name="Todd J.D."/>
            <person name="Poole P.S."/>
            <person name="Mauchline T.H."/>
            <person name="East A.K."/>
            <person name="Quail M.A."/>
            <person name="Churcher C."/>
            <person name="Arrowsmith C."/>
            <person name="Cherevach I."/>
            <person name="Chillingworth T."/>
            <person name="Clarke K."/>
            <person name="Cronin A."/>
            <person name="Davis P."/>
            <person name="Fraser A."/>
            <person name="Hance Z."/>
            <person name="Hauser H."/>
            <person name="Jagels K."/>
            <person name="Moule S."/>
            <person name="Mungall K."/>
            <person name="Norbertczak H."/>
            <person name="Rabbinowitsch E."/>
            <person name="Sanders M."/>
            <person name="Simmonds M."/>
            <person name="Whitehead S."/>
            <person name="Parkhill J."/>
        </authorList>
    </citation>
    <scope>NUCLEOTIDE SEQUENCE [LARGE SCALE GENOMIC DNA]</scope>
    <source>
        <strain>DSM 114642 / LMG 32736 / 3841</strain>
    </source>
</reference>